<keyword id="KW-0192">Crown gall tumor</keyword>
<keyword id="KW-0203">Cytokinin biosynthesis</keyword>
<keyword id="KW-0614">Plasmid</keyword>
<keyword id="KW-0808">Transferase</keyword>
<feature type="chain" id="PRO_0000216435" description="Adenylate dimethylallyltransferase">
    <location>
        <begin position="1"/>
        <end position="240"/>
    </location>
</feature>
<organism>
    <name type="scientific">Agrobacterium vitis</name>
    <name type="common">Rhizobium vitis</name>
    <dbReference type="NCBI Taxonomy" id="373"/>
    <lineage>
        <taxon>Bacteria</taxon>
        <taxon>Pseudomonadati</taxon>
        <taxon>Pseudomonadota</taxon>
        <taxon>Alphaproteobacteria</taxon>
        <taxon>Hyphomicrobiales</taxon>
        <taxon>Rhizobiaceae</taxon>
        <taxon>Rhizobium/Agrobacterium group</taxon>
        <taxon>Agrobacterium</taxon>
    </lineage>
</organism>
<sequence>MDLRLIFGPTCTGKTSTAIALAQQTGLPVLSLDRVQCCPQLSTGSGRPTVEELKGTTRLYLDDRPLVKGIIAAEQAHERLIAEVYNYEAHGGLILEGGSISLLKCMAQSGYWSADFRWHIIRHKLADEETFMKAAKARVKQMLCPAIGPSLIQELVYLWNEPRLRPILKEIDGYRYAMLFASQNRITPDMLLQLDADMEGKLIHGIAQEYLIHARRQEHEFPPVSAAAFEGFEGPPFGAY</sequence>
<gene>
    <name type="primary">ipt</name>
</gene>
<evidence type="ECO:0000250" key="1"/>
<evidence type="ECO:0000305" key="2"/>
<geneLocation type="plasmid">
    <name>pTiTM4</name>
</geneLocation>
<name>IPT_AGRVI</name>
<comment type="function">
    <text evidence="1">Transfers dimethylallyl groups to AMP as part of the biosynthesis of cytokinin phytohormones.</text>
</comment>
<comment type="catalytic activity">
    <reaction>
        <text>dimethylallyl diphosphate + AMP = N(6)-(dimethylallyl)adenosine 5'-phosphate + diphosphate</text>
        <dbReference type="Rhea" id="RHEA:15285"/>
        <dbReference type="ChEBI" id="CHEBI:33019"/>
        <dbReference type="ChEBI" id="CHEBI:57526"/>
        <dbReference type="ChEBI" id="CHEBI:57623"/>
        <dbReference type="ChEBI" id="CHEBI:456215"/>
        <dbReference type="EC" id="2.5.1.27"/>
    </reaction>
</comment>
<comment type="similarity">
    <text evidence="2">Belongs to the isopentenyl transferase family.</text>
</comment>
<dbReference type="EC" id="2.5.1.27"/>
<dbReference type="EMBL" id="X56185">
    <property type="protein sequence ID" value="CAA39647.1"/>
    <property type="molecule type" value="Genomic_DNA"/>
</dbReference>
<dbReference type="EMBL" id="X17428">
    <property type="protein sequence ID" value="CAA35471.1"/>
    <property type="molecule type" value="Genomic_DNA"/>
</dbReference>
<dbReference type="EMBL" id="U83987">
    <property type="protein sequence ID" value="AAB41875.1"/>
    <property type="molecule type" value="Genomic_DNA"/>
</dbReference>
<dbReference type="RefSeq" id="WP_032488312.1">
    <property type="nucleotide sequence ID" value="NZ_CP055267.1"/>
</dbReference>
<dbReference type="SMR" id="P25018"/>
<dbReference type="GeneID" id="60685090"/>
<dbReference type="OrthoDB" id="8293568at2"/>
<dbReference type="GO" id="GO:0009824">
    <property type="term" value="F:AMP dimethylallyltransferase activity"/>
    <property type="evidence" value="ECO:0007669"/>
    <property type="project" value="UniProtKB-EC"/>
</dbReference>
<dbReference type="GO" id="GO:0009691">
    <property type="term" value="P:cytokinin biosynthetic process"/>
    <property type="evidence" value="ECO:0007669"/>
    <property type="project" value="UniProtKB-KW"/>
</dbReference>
<dbReference type="Gene3D" id="1.10.287.890">
    <property type="entry name" value="Crystal structure of tRNA isopentenylpyrophosphate transferase (bh2366) domain"/>
    <property type="match status" value="1"/>
</dbReference>
<dbReference type="Gene3D" id="3.40.50.300">
    <property type="entry name" value="P-loop containing nucleotide triphosphate hydrolases"/>
    <property type="match status" value="1"/>
</dbReference>
<dbReference type="InterPro" id="IPR027417">
    <property type="entry name" value="P-loop_NTPase"/>
</dbReference>
<dbReference type="InterPro" id="IPR002648">
    <property type="entry name" value="Tzs"/>
</dbReference>
<dbReference type="Pfam" id="PF01745">
    <property type="entry name" value="IPT"/>
    <property type="match status" value="1"/>
</dbReference>
<dbReference type="PIRSF" id="PIRSF000507">
    <property type="entry name" value="IPT"/>
    <property type="match status" value="1"/>
</dbReference>
<dbReference type="SUPFAM" id="SSF52540">
    <property type="entry name" value="P-loop containing nucleoside triphosphate hydrolases"/>
    <property type="match status" value="1"/>
</dbReference>
<reference key="1">
    <citation type="journal article" date="1989" name="Mol. Gen. Genet.">
        <title>Nucleotide sequence, evolutionary origin and biological role of a rearranged cytokinin gene isolated from a wide host range biotype III Agrobacterium strain.</title>
        <authorList>
            <person name="Bonnard G."/>
            <person name="Tinland B."/>
            <person name="Paulus F."/>
            <person name="Szegedi E."/>
            <person name="Otten L."/>
        </authorList>
    </citation>
    <scope>NUCLEOTIDE SEQUENCE [GENOMIC DNA]</scope>
    <source>
        <strain>TM4</strain>
    </source>
</reference>
<reference key="2">
    <citation type="submission" date="1997-02" db="EMBL/GenBank/DDBJ databases">
        <authorList>
            <person name="Otten L."/>
            <person name="de Ruffray P."/>
        </authorList>
    </citation>
    <scope>NUCLEOTIDE SEQUENCE [GENOMIC DNA]</scope>
    <source>
        <strain>CG474</strain>
    </source>
</reference>
<proteinExistence type="inferred from homology"/>
<accession>P25018</accession>
<protein>
    <recommendedName>
        <fullName>Adenylate dimethylallyltransferase</fullName>
        <ecNumber>2.5.1.27</ecNumber>
    </recommendedName>
    <alternativeName>
        <fullName>Dimethylallyl transferase</fullName>
    </alternativeName>
    <alternativeName>
        <fullName>Isopentenyl transferase</fullName>
    </alternativeName>
</protein>